<sequence>MRNEEAEKLFWIFNNKVRPINYSEIVENTTPRKSSINREKIESENNGQVYNELFFFKLLLNEDLSKFLISLINTNLRHEREKKLDKGKDISRLNDLTDITFWKFITDYLKNIYSNKNNDKIPPELINLKMMDHNRYSAVHNVLDMKSHRFEEYCEIFMNSALKYINIGNVLNCDETIYAYYGKDAIKDHILINNDSKPHSVGIEAYSLTTKLNISNCPYVISYGPRTPENCQSPFNSLKTLLDNLHSKYNWEDPRNNLIVCCDSAFALVNNKECLDELKCRILSSTRKSGVTVPQEIKIFVKPLLTIHKTFLFYDESTGLLYEYTKNTAGHINCIATNLYSRYSNPYVEINNNLNIEQFATIGNLFRFSKKELELIFVGETLHGTTLEILNGKYKTNFVKPPCGPFWNEQMLKKLSAEHIAQIYNDKYKKENNNLNKNDKIKKILEPLDSTQDGGIYDKNKNYSKKELQDLKIKVIGTHQNRSQMIHDQYIFWYNLVDITDKRYYATIRGSSSHSYTKLFILGGLFDLILNSYSLHREYHEMELECKNPENQPPEIIQTINKFVESLIFQFHELKELQ</sequence>
<feature type="chain" id="PRO_0000327960" description="Suppressor of smlA">
    <location>
        <begin position="1"/>
        <end position="578"/>
    </location>
</feature>
<feature type="splice variant" id="VSP_032742" description="In isoform 2." evidence="2">
    <location>
        <begin position="1"/>
        <end position="129"/>
    </location>
</feature>
<organism>
    <name type="scientific">Dictyostelium discoideum</name>
    <name type="common">Social amoeba</name>
    <dbReference type="NCBI Taxonomy" id="44689"/>
    <lineage>
        <taxon>Eukaryota</taxon>
        <taxon>Amoebozoa</taxon>
        <taxon>Evosea</taxon>
        <taxon>Eumycetozoa</taxon>
        <taxon>Dictyostelia</taxon>
        <taxon>Dictyosteliales</taxon>
        <taxon>Dictyosteliaceae</taxon>
        <taxon>Dictyostelium</taxon>
    </lineage>
</organism>
<keyword id="KW-0025">Alternative splicing</keyword>
<keyword id="KW-1185">Reference proteome</keyword>
<gene>
    <name type="primary">sslA1</name>
    <name type="ORF">DDB_G0284335</name>
</gene>
<name>SSLA1_DICDI</name>
<protein>
    <recommendedName>
        <fullName>Suppressor of smlA</fullName>
    </recommendedName>
    <alternativeName>
        <fullName>Protein secondary enhancer of smlA</fullName>
    </alternativeName>
</protein>
<evidence type="ECO:0000269" key="1">
    <source>
    </source>
</evidence>
<evidence type="ECO:0000303" key="2">
    <source>
    </source>
</evidence>
<evidence type="ECO:0000305" key="3"/>
<proteinExistence type="evidence at transcript level"/>
<dbReference type="EMBL" id="AF508975">
    <property type="protein sequence ID" value="AAM34288.2"/>
    <property type="status" value="ALT_FRAME"/>
    <property type="molecule type" value="mRNA"/>
</dbReference>
<dbReference type="EMBL" id="AAFI02000064">
    <property type="protein sequence ID" value="EAL65215.2"/>
    <property type="molecule type" value="Genomic_DNA"/>
</dbReference>
<dbReference type="RefSeq" id="XP_638582.4">
    <property type="nucleotide sequence ID" value="XM_633490.3"/>
</dbReference>
<dbReference type="FunCoup" id="P0DJ29">
    <property type="interactions" value="125"/>
</dbReference>
<dbReference type="STRING" id="44689.P0DJ29"/>
<dbReference type="PaxDb" id="44689-DDB0191417"/>
<dbReference type="GeneID" id="8624555"/>
<dbReference type="KEGG" id="ddi:DDB_G0278309"/>
<dbReference type="KEGG" id="ddi:DDB_G0284335"/>
<dbReference type="dictyBase" id="DDB_G0284335">
    <property type="gene designation" value="sslA1"/>
</dbReference>
<dbReference type="VEuPathDB" id="AmoebaDB:DDB_G0284335"/>
<dbReference type="HOGENOM" id="CLU_472093_0_0_1"/>
<dbReference type="InParanoid" id="P0DJ29"/>
<dbReference type="OMA" id="HINCIAT"/>
<dbReference type="PRO" id="PR:P0DJ29"/>
<dbReference type="Proteomes" id="UP000002195">
    <property type="component" value="Chromosome 4"/>
</dbReference>
<dbReference type="GO" id="GO:0031982">
    <property type="term" value="C:vesicle"/>
    <property type="evidence" value="ECO:0000314"/>
    <property type="project" value="dictyBase"/>
</dbReference>
<dbReference type="GO" id="GO:0031159">
    <property type="term" value="P:positive regulation of aggregate size involved in sorocarp development"/>
    <property type="evidence" value="ECO:0000315"/>
    <property type="project" value="dictyBase"/>
</dbReference>
<dbReference type="GO" id="GO:0007165">
    <property type="term" value="P:signal transduction"/>
    <property type="evidence" value="ECO:0000315"/>
    <property type="project" value="dictyBase"/>
</dbReference>
<accession>P0DJ29</accession>
<accession>Q54PS2</accession>
<accession>Q54YC3</accession>
<accession>Q8MZN2</accession>
<reference key="1">
    <citation type="journal article" date="2007" name="Eukaryot. Cell">
        <title>A cell number-counting factor regulates levels of a novel protein, SslA, as part of a group size regulation mechanism in Dictyostelium.</title>
        <authorList>
            <person name="Gao T."/>
            <person name="Roisin-Bouffay C."/>
            <person name="Hatton R.D."/>
            <person name="Tang L."/>
            <person name="Brock D.A."/>
            <person name="DeShazo T."/>
            <person name="Olson L."/>
            <person name="Hong W.-P."/>
            <person name="Jang W."/>
            <person name="Canseco E."/>
            <person name="Bakthavatsalam D."/>
            <person name="Gomer R.H."/>
        </authorList>
    </citation>
    <scope>NUCLEOTIDE SEQUENCE [MRNA] (ISOFORM 2)</scope>
    <scope>FUNCTION</scope>
</reference>
<reference key="2">
    <citation type="journal article" date="2005" name="Nature">
        <title>The genome of the social amoeba Dictyostelium discoideum.</title>
        <authorList>
            <person name="Eichinger L."/>
            <person name="Pachebat J.A."/>
            <person name="Gloeckner G."/>
            <person name="Rajandream M.A."/>
            <person name="Sucgang R."/>
            <person name="Berriman M."/>
            <person name="Song J."/>
            <person name="Olsen R."/>
            <person name="Szafranski K."/>
            <person name="Xu Q."/>
            <person name="Tunggal B."/>
            <person name="Kummerfeld S."/>
            <person name="Madera M."/>
            <person name="Konfortov B.A."/>
            <person name="Rivero F."/>
            <person name="Bankier A.T."/>
            <person name="Lehmann R."/>
            <person name="Hamlin N."/>
            <person name="Davies R."/>
            <person name="Gaudet P."/>
            <person name="Fey P."/>
            <person name="Pilcher K."/>
            <person name="Chen G."/>
            <person name="Saunders D."/>
            <person name="Sodergren E.J."/>
            <person name="Davis P."/>
            <person name="Kerhornou A."/>
            <person name="Nie X."/>
            <person name="Hall N."/>
            <person name="Anjard C."/>
            <person name="Hemphill L."/>
            <person name="Bason N."/>
            <person name="Farbrother P."/>
            <person name="Desany B."/>
            <person name="Just E."/>
            <person name="Morio T."/>
            <person name="Rost R."/>
            <person name="Churcher C.M."/>
            <person name="Cooper J."/>
            <person name="Haydock S."/>
            <person name="van Driessche N."/>
            <person name="Cronin A."/>
            <person name="Goodhead I."/>
            <person name="Muzny D.M."/>
            <person name="Mourier T."/>
            <person name="Pain A."/>
            <person name="Lu M."/>
            <person name="Harper D."/>
            <person name="Lindsay R."/>
            <person name="Hauser H."/>
            <person name="James K.D."/>
            <person name="Quiles M."/>
            <person name="Madan Babu M."/>
            <person name="Saito T."/>
            <person name="Buchrieser C."/>
            <person name="Wardroper A."/>
            <person name="Felder M."/>
            <person name="Thangavelu M."/>
            <person name="Johnson D."/>
            <person name="Knights A."/>
            <person name="Loulseged H."/>
            <person name="Mungall K.L."/>
            <person name="Oliver K."/>
            <person name="Price C."/>
            <person name="Quail M.A."/>
            <person name="Urushihara H."/>
            <person name="Hernandez J."/>
            <person name="Rabbinowitsch E."/>
            <person name="Steffen D."/>
            <person name="Sanders M."/>
            <person name="Ma J."/>
            <person name="Kohara Y."/>
            <person name="Sharp S."/>
            <person name="Simmonds M.N."/>
            <person name="Spiegler S."/>
            <person name="Tivey A."/>
            <person name="Sugano S."/>
            <person name="White B."/>
            <person name="Walker D."/>
            <person name="Woodward J.R."/>
            <person name="Winckler T."/>
            <person name="Tanaka Y."/>
            <person name="Shaulsky G."/>
            <person name="Schleicher M."/>
            <person name="Weinstock G.M."/>
            <person name="Rosenthal A."/>
            <person name="Cox E.C."/>
            <person name="Chisholm R.L."/>
            <person name="Gibbs R.A."/>
            <person name="Loomis W.F."/>
            <person name="Platzer M."/>
            <person name="Kay R.R."/>
            <person name="Williams J.G."/>
            <person name="Dear P.H."/>
            <person name="Noegel A.A."/>
            <person name="Barrell B.G."/>
            <person name="Kuspa A."/>
        </authorList>
    </citation>
    <scope>NUCLEOTIDE SEQUENCE [LARGE SCALE GENOMIC DNA]</scope>
    <source>
        <strain>AX4</strain>
    </source>
</reference>
<comment type="function">
    <text evidence="1">Involved in regulation of group size of aggregation streams.</text>
</comment>
<comment type="alternative products">
    <event type="alternative splicing"/>
    <isoform>
        <id>P0DJ29-1</id>
        <name>1</name>
        <sequence type="displayed"/>
    </isoform>
    <isoform>
        <id>P0DJ29-2</id>
        <name>2</name>
        <sequence type="described" ref="VSP_032742"/>
    </isoform>
</comment>
<comment type="sequence caution" evidence="3">
    <conflict type="frameshift">
        <sequence resource="EMBL-CDS" id="AAM34288"/>
    </conflict>
</comment>